<sequence>MSLHLSQDFALKASAAVAVLLLAAWVRLRRRIQSKISNIPGPKPTSLLGNYSQLHSAEKGWEFFDEIHAKYGNVCRISTPVGCNDIIYLADPLALNHMNRRDEAKFDDPHEIHIMLQMVLGNKGLGATSGAEHHRQRKFLNPVFGPSYLRHMPPLFYEVTHRFLDAMRILCADGQREIDMSHWGTRVSLEFVGKGAIGFELDSLAIDSKPNLYGEEMKQGFVALSTPAARLAMKYFLPRIASLRTPKFNRWLLNLVPSPLVTIVKNFVWELDANSRTMFQQKKEALLKGGDALSEQSSKGKDLMTALIREHVLVDRADKVDEEEATSHFRTLLFAATDTSSSAILRTIQLLAEHPDVQTRLREEINTAKADADGDLSYEKLLALPLLDAVYRETLRLYPPASYIDRVAHEDVVLPLAFPITGVDGTQMSELVVPKGTVVTMSIVGVNRSTAIWGPDALVWNPDRWLAPLPETVKSSKMPGITSSIMTFLDGKRHCLGYRYVQMELKILISEIVCTLAFAPTEKHAKIEWPMGLTLSPFVDGKMSMPLKVSLA</sequence>
<feature type="chain" id="PRO_0000452920" description="Cytochrome P450 monooxyhenase eriI">
    <location>
        <begin position="1"/>
        <end position="552"/>
    </location>
</feature>
<feature type="transmembrane region" description="Helical" evidence="2">
    <location>
        <begin position="9"/>
        <end position="26"/>
    </location>
</feature>
<feature type="binding site" description="axial binding residue" evidence="1">
    <location>
        <position position="495"/>
    </location>
    <ligand>
        <name>heme</name>
        <dbReference type="ChEBI" id="CHEBI:30413"/>
    </ligand>
    <ligandPart>
        <name>Fe</name>
        <dbReference type="ChEBI" id="CHEBI:18248"/>
    </ligandPart>
</feature>
<feature type="glycosylation site" description="N-linked (GlcNAc...) asparagine" evidence="3">
    <location>
        <position position="50"/>
    </location>
</feature>
<feature type="glycosylation site" description="N-linked (GlcNAc...) asparagine" evidence="3">
    <location>
        <position position="447"/>
    </location>
</feature>
<evidence type="ECO:0000250" key="1">
    <source>
        <dbReference type="UniProtKB" id="P04798"/>
    </source>
</evidence>
<evidence type="ECO:0000255" key="2"/>
<evidence type="ECO:0000255" key="3">
    <source>
        <dbReference type="PROSITE-ProRule" id="PRU00498"/>
    </source>
</evidence>
<evidence type="ECO:0000269" key="4">
    <source>
    </source>
</evidence>
<evidence type="ECO:0000269" key="5">
    <source>
    </source>
</evidence>
<evidence type="ECO:0000303" key="6">
    <source>
    </source>
</evidence>
<evidence type="ECO:0000305" key="7"/>
<evidence type="ECO:0000305" key="8">
    <source>
    </source>
</evidence>
<protein>
    <recommendedName>
        <fullName evidence="6">Cytochrome P450 monooxyhenase eriI</fullName>
        <ecNumber evidence="5">1.-.-.-</ecNumber>
    </recommendedName>
    <alternativeName>
        <fullName evidence="6">Erinacine biosynthesis cluster protein IA</fullName>
    </alternativeName>
</protein>
<dbReference type="EC" id="1.-.-.-" evidence="5"/>
<dbReference type="EMBL" id="KY683784">
    <property type="protein sequence ID" value="ARE72246.1"/>
    <property type="molecule type" value="mRNA"/>
</dbReference>
<dbReference type="SMR" id="A0A1V0QSE9"/>
<dbReference type="GlyCosmos" id="A0A1V0QSE9">
    <property type="glycosylation" value="2 sites, No reported glycans"/>
</dbReference>
<dbReference type="BioCyc" id="MetaCyc:MONOMER-124257"/>
<dbReference type="GO" id="GO:0016020">
    <property type="term" value="C:membrane"/>
    <property type="evidence" value="ECO:0007669"/>
    <property type="project" value="UniProtKB-SubCell"/>
</dbReference>
<dbReference type="GO" id="GO:0020037">
    <property type="term" value="F:heme binding"/>
    <property type="evidence" value="ECO:0007669"/>
    <property type="project" value="InterPro"/>
</dbReference>
<dbReference type="GO" id="GO:0005506">
    <property type="term" value="F:iron ion binding"/>
    <property type="evidence" value="ECO:0007669"/>
    <property type="project" value="InterPro"/>
</dbReference>
<dbReference type="GO" id="GO:0004497">
    <property type="term" value="F:monooxygenase activity"/>
    <property type="evidence" value="ECO:0007669"/>
    <property type="project" value="UniProtKB-KW"/>
</dbReference>
<dbReference type="GO" id="GO:0016705">
    <property type="term" value="F:oxidoreductase activity, acting on paired donors, with incorporation or reduction of molecular oxygen"/>
    <property type="evidence" value="ECO:0007669"/>
    <property type="project" value="InterPro"/>
</dbReference>
<dbReference type="Gene3D" id="1.10.630.10">
    <property type="entry name" value="Cytochrome P450"/>
    <property type="match status" value="1"/>
</dbReference>
<dbReference type="InterPro" id="IPR001128">
    <property type="entry name" value="Cyt_P450"/>
</dbReference>
<dbReference type="InterPro" id="IPR002403">
    <property type="entry name" value="Cyt_P450_E_grp-IV"/>
</dbReference>
<dbReference type="InterPro" id="IPR036396">
    <property type="entry name" value="Cyt_P450_sf"/>
</dbReference>
<dbReference type="InterPro" id="IPR050121">
    <property type="entry name" value="Cytochrome_P450_monoxygenase"/>
</dbReference>
<dbReference type="PANTHER" id="PTHR24305">
    <property type="entry name" value="CYTOCHROME P450"/>
    <property type="match status" value="1"/>
</dbReference>
<dbReference type="PANTHER" id="PTHR24305:SF166">
    <property type="entry name" value="CYTOCHROME P450 12A4, MITOCHONDRIAL-RELATED"/>
    <property type="match status" value="1"/>
</dbReference>
<dbReference type="Pfam" id="PF00067">
    <property type="entry name" value="p450"/>
    <property type="match status" value="1"/>
</dbReference>
<dbReference type="PRINTS" id="PR00465">
    <property type="entry name" value="EP450IV"/>
</dbReference>
<dbReference type="PRINTS" id="PR00385">
    <property type="entry name" value="P450"/>
</dbReference>
<dbReference type="SUPFAM" id="SSF48264">
    <property type="entry name" value="Cytochrome P450"/>
    <property type="match status" value="1"/>
</dbReference>
<name>ERII_HERER</name>
<proteinExistence type="evidence at protein level"/>
<organism>
    <name type="scientific">Hericium erinaceus</name>
    <name type="common">Lion's mane mushroom</name>
    <name type="synonym">Hydnum erinaceus</name>
    <dbReference type="NCBI Taxonomy" id="91752"/>
    <lineage>
        <taxon>Eukaryota</taxon>
        <taxon>Fungi</taxon>
        <taxon>Dikarya</taxon>
        <taxon>Basidiomycota</taxon>
        <taxon>Agaricomycotina</taxon>
        <taxon>Agaricomycetes</taxon>
        <taxon>Russulales</taxon>
        <taxon>Hericiaceae</taxon>
        <taxon>Hericium</taxon>
    </lineage>
</organism>
<comment type="function">
    <text evidence="4 5 8">Cytochrome P450 monooxygenase; part of the gene cluster that mediates the biosynthesis of erinacines, cyathane-xylosides that show unique biological activities, including leishmanicidal activity, stimulating activity for nerve growth-factor synthesis, and agonistic activity toward the kappa opioid receptor (PubMed:28371074, PubMed:31535864). Within the pathway, eriI hydroxylates cyatha-3,12-diene at C-14 of the seven-membered ring to yield erinacol (PubMed:31535864). The first step of the erinacines biosynthesis pathway is catalyzed by the geranylgeranyl diphosphate (GGPP) synthase eriE via conversion of farnesyl pyrophosphate and isopentyl pyrophosphate into geranylgeranyl pyrophosphate (GGPP). GGPP is then substrate of the diterpene cyclase eriG for the production of cyatha-3,12-diene. The cytochrome P450 monooxygenase eriI then hydroxylates cyatha-3,12-diene at C-14 of the seven-membered ring to produce erinacol, which is further hydroxylated at C-15 by the cytochrome P450 monooxygenase eriC to yield cyathadiol. The cytochrome P450 monooxygenase eriA then catalyzes C-11 hydroxylation in the presence of the short chain dehydrogenase/reductase (SDR) eriH, which leads to the production of cyathatriol. The acetyltransferase eriL converts cyathatriol into 11-O-acetyl-cyathatriol. The SDR eriH catalyzes further oxidation of 11-O-acetyl-cyathatriol into 1-O-acetylcyathin A3. Finally, the glycosyl transferase eriJ tranfers xylose from UDP-xylose onto C-14 of 11-O-acetyl-cyathatriol to form eracine Q. EriJ is also able to convert 11-O-acetyl-cyathatriol to eracine Q2 by using UDP-D-glucose as cosubstrate, but at a lower rate (Probable).</text>
</comment>
<comment type="function">
    <text evidence="4 5 8">Cytochrome P450 monooxygenase; part of the gene cluster that mediates the biosynthesis of erinacines, cyathane-xylosides that show unique biological activities, including leishmanicidal activity, stimulating activity for nerve growth-factor synthesis, and agonistic activity toward the kappa opioid receptor (PubMed:31535864). The geranylgeranyl diphosphate (GGPP) synthase eriE catalyzes the first step in erinacines biosynthesis via conversion of farnesyl pyrophosphate and isopentyl pyrophosphate into geranylgeranyl pyrophosphate (GGPP) (PubMed:31535864). GGPP is then substrate of the diterpene cyclase eriG for the production of cyatha-3,12-diene (PubMed:28371074). EriG is unable to use geranyl diphosphate (GPP) or farnesyl diphosphate (FPP) as substrates (PubMed:28371074). The cytochrome P450 monooxygenase eriI then hydroxylates cyatha-3,12-diene at C-14 of the seven-membered ring to produce erinacol, which is further hydroxylated at C-15 by the cytochrome P450 monooxygenase eriC to yield cyathadiol (PubMed:31535864). The cytochrome P450 monooxygenase eriA then catalyzes C-11 hydroxylation in the presence of the short chain dehydrogenase/reductase (SDR) eriH, which leads to the production of cyathatriol (PubMed:31535864). The acetyltransferase eriL converts cyathatriol into 11-O-acetyl-cyathatriol (PubMed:31535864). The SDR eriH catalyzes further oxidation of 11-O-acetyl-cyathatriol into 1-O-acetylcyathin A3 (PubMed:31535864). Finally, the glycosyl transferase eriJ tranfers xylose from UDP-xylose onto C-14 of 11-O-acetyl-cyathatriol to form eracine Q (PubMed:31535864). EriJ is also able to convert 11-O-acetyl-cyathatriol to eracine Q2 by using UDP-D-glucose as cosubstrate, but at a lower rate (PubMed:31535864). In the absence of eriL and eriJ, the SDR eriH is able to convert cyathatriol to cyathin A3; this is likely a switching mechanism in the biosynthesis of cyathins (C-14 ketogroup)and erinacines (C-14 glycosylated group) (PubMed:31535864). The roles of the SDR eriB, the polyprenyl transferase eriF and the dehydrogenase eriK have still to be identified (Probable).</text>
</comment>
<comment type="catalytic activity">
    <reaction evidence="5">
        <text>(-)-cyatha-3,12-diene + reduced [NADPH--hemoprotein reductase] + O2 = erinacol + oxidized [NADPH--hemoprotein reductase] + H2O + H(+)</text>
        <dbReference type="Rhea" id="RHEA:75555"/>
        <dbReference type="Rhea" id="RHEA-COMP:11964"/>
        <dbReference type="Rhea" id="RHEA-COMP:11965"/>
        <dbReference type="ChEBI" id="CHEBI:15377"/>
        <dbReference type="ChEBI" id="CHEBI:15378"/>
        <dbReference type="ChEBI" id="CHEBI:15379"/>
        <dbReference type="ChEBI" id="CHEBI:57618"/>
        <dbReference type="ChEBI" id="CHEBI:58210"/>
        <dbReference type="ChEBI" id="CHEBI:193155"/>
        <dbReference type="ChEBI" id="CHEBI:194345"/>
    </reaction>
    <physiologicalReaction direction="left-to-right" evidence="5">
        <dbReference type="Rhea" id="RHEA:75556"/>
    </physiologicalReaction>
</comment>
<comment type="cofactor">
    <cofactor evidence="1">
        <name>heme</name>
        <dbReference type="ChEBI" id="CHEBI:30413"/>
    </cofactor>
</comment>
<comment type="pathway">
    <text evidence="5">Secondary metabolite biosynthesis.</text>
</comment>
<comment type="subcellular location">
    <subcellularLocation>
        <location evidence="2">Membrane</location>
        <topology evidence="2">Single-pass membrane protein</topology>
    </subcellularLocation>
</comment>
<comment type="induction">
    <text evidence="4">Expression is induced under erinacine P-producing conditions.</text>
</comment>
<comment type="similarity">
    <text evidence="7">Belongs to the cytochrome P450 family.</text>
</comment>
<accession>A0A1V0QSE9</accession>
<gene>
    <name evidence="6" type="primary">eriI</name>
</gene>
<keyword id="KW-0325">Glycoprotein</keyword>
<keyword id="KW-0349">Heme</keyword>
<keyword id="KW-0408">Iron</keyword>
<keyword id="KW-0472">Membrane</keyword>
<keyword id="KW-0479">Metal-binding</keyword>
<keyword id="KW-0503">Monooxygenase</keyword>
<keyword id="KW-0560">Oxidoreductase</keyword>
<keyword id="KW-0812">Transmembrane</keyword>
<keyword id="KW-1133">Transmembrane helix</keyword>
<reference key="1">
    <citation type="journal article" date="2017" name="Angew. Chem. Int. Ed.">
        <title>Discovery and characterization of a new family of diterpene cyclases in bacteria and fungi.</title>
        <authorList>
            <person name="Yang Y.L."/>
            <person name="Zhang S."/>
            <person name="Ma K."/>
            <person name="Xu Y."/>
            <person name="Tao Q."/>
            <person name="Chen Y."/>
            <person name="Chen J."/>
            <person name="Guo S."/>
            <person name="Ren J."/>
            <person name="Wang W."/>
            <person name="Tao Y."/>
            <person name="Yin W.B."/>
            <person name="Liu H."/>
        </authorList>
    </citation>
    <scope>NUCLEOTIDE SEQUENCE [MRNA]</scope>
    <scope>FUNCTION</scope>
    <scope>INDUCTION</scope>
</reference>
<reference key="2">
    <citation type="journal article" date="2019" name="J. Am. Chem. Soc.">
        <title>Efficient reconstitution of basidiomycota diterpene erinacine gene cluster in ascomycota host Aspergillus oryzae based on genomic DNA sequences.</title>
        <authorList>
            <person name="Liu C."/>
            <person name="Minami A."/>
            <person name="Ozaki T."/>
            <person name="Wu J."/>
            <person name="Kawagishi H."/>
            <person name="Maruyama J.I."/>
            <person name="Oikawa H."/>
        </authorList>
    </citation>
    <scope>FUNCTION</scope>
    <scope>CATALYTIC ACTIVITY</scope>
    <scope>PATHWAY</scope>
</reference>